<protein>
    <recommendedName>
        <fullName evidence="1">Uracil-DNA glycosylase</fullName>
        <shortName evidence="1">UDG</shortName>
        <ecNumber evidence="1">3.2.2.27</ecNumber>
    </recommendedName>
</protein>
<evidence type="ECO:0000255" key="1">
    <source>
        <dbReference type="HAMAP-Rule" id="MF_00148"/>
    </source>
</evidence>
<name>UNG_BORDL</name>
<gene>
    <name evidence="1" type="primary">ung</name>
    <name type="ordered locus">BDU_57</name>
</gene>
<organism>
    <name type="scientific">Borrelia duttonii (strain Ly)</name>
    <dbReference type="NCBI Taxonomy" id="412419"/>
    <lineage>
        <taxon>Bacteria</taxon>
        <taxon>Pseudomonadati</taxon>
        <taxon>Spirochaetota</taxon>
        <taxon>Spirochaetia</taxon>
        <taxon>Spirochaetales</taxon>
        <taxon>Borreliaceae</taxon>
        <taxon>Borrelia</taxon>
    </lineage>
</organism>
<proteinExistence type="inferred from homology"/>
<dbReference type="EC" id="3.2.2.27" evidence="1"/>
<dbReference type="EMBL" id="CP000976">
    <property type="protein sequence ID" value="ACH93013.1"/>
    <property type="molecule type" value="Genomic_DNA"/>
</dbReference>
<dbReference type="RefSeq" id="WP_012537825.1">
    <property type="nucleotide sequence ID" value="NC_011229.1"/>
</dbReference>
<dbReference type="SMR" id="B5RKV2"/>
<dbReference type="STRING" id="412419.BDU_57"/>
<dbReference type="KEGG" id="bdu:BDU_57"/>
<dbReference type="eggNOG" id="COG0692">
    <property type="taxonomic scope" value="Bacteria"/>
</dbReference>
<dbReference type="HOGENOM" id="CLU_032162_3_0_12"/>
<dbReference type="OrthoDB" id="9804372at2"/>
<dbReference type="Proteomes" id="UP000000611">
    <property type="component" value="Chromosome"/>
</dbReference>
<dbReference type="GO" id="GO:0005737">
    <property type="term" value="C:cytoplasm"/>
    <property type="evidence" value="ECO:0007669"/>
    <property type="project" value="UniProtKB-SubCell"/>
</dbReference>
<dbReference type="GO" id="GO:0004844">
    <property type="term" value="F:uracil DNA N-glycosylase activity"/>
    <property type="evidence" value="ECO:0007669"/>
    <property type="project" value="UniProtKB-UniRule"/>
</dbReference>
<dbReference type="GO" id="GO:0097510">
    <property type="term" value="P:base-excision repair, AP site formation via deaminated base removal"/>
    <property type="evidence" value="ECO:0007669"/>
    <property type="project" value="TreeGrafter"/>
</dbReference>
<dbReference type="CDD" id="cd10027">
    <property type="entry name" value="UDG-F1-like"/>
    <property type="match status" value="1"/>
</dbReference>
<dbReference type="FunFam" id="3.40.470.10:FF:000001">
    <property type="entry name" value="Uracil-DNA glycosylase"/>
    <property type="match status" value="1"/>
</dbReference>
<dbReference type="Gene3D" id="3.40.470.10">
    <property type="entry name" value="Uracil-DNA glycosylase-like domain"/>
    <property type="match status" value="1"/>
</dbReference>
<dbReference type="HAMAP" id="MF_00148">
    <property type="entry name" value="UDG"/>
    <property type="match status" value="1"/>
</dbReference>
<dbReference type="InterPro" id="IPR002043">
    <property type="entry name" value="UDG_fam1"/>
</dbReference>
<dbReference type="InterPro" id="IPR018085">
    <property type="entry name" value="Ura-DNA_Glyclase_AS"/>
</dbReference>
<dbReference type="InterPro" id="IPR005122">
    <property type="entry name" value="Uracil-DNA_glycosylase-like"/>
</dbReference>
<dbReference type="InterPro" id="IPR036895">
    <property type="entry name" value="Uracil-DNA_glycosylase-like_sf"/>
</dbReference>
<dbReference type="NCBIfam" id="NF003588">
    <property type="entry name" value="PRK05254.1-1"/>
    <property type="match status" value="1"/>
</dbReference>
<dbReference type="NCBIfam" id="NF003589">
    <property type="entry name" value="PRK05254.1-2"/>
    <property type="match status" value="1"/>
</dbReference>
<dbReference type="NCBIfam" id="NF003591">
    <property type="entry name" value="PRK05254.1-4"/>
    <property type="match status" value="1"/>
</dbReference>
<dbReference type="NCBIfam" id="NF003592">
    <property type="entry name" value="PRK05254.1-5"/>
    <property type="match status" value="1"/>
</dbReference>
<dbReference type="NCBIfam" id="TIGR00628">
    <property type="entry name" value="ung"/>
    <property type="match status" value="1"/>
</dbReference>
<dbReference type="PANTHER" id="PTHR11264">
    <property type="entry name" value="URACIL-DNA GLYCOSYLASE"/>
    <property type="match status" value="1"/>
</dbReference>
<dbReference type="PANTHER" id="PTHR11264:SF0">
    <property type="entry name" value="URACIL-DNA GLYCOSYLASE"/>
    <property type="match status" value="1"/>
</dbReference>
<dbReference type="Pfam" id="PF03167">
    <property type="entry name" value="UDG"/>
    <property type="match status" value="1"/>
</dbReference>
<dbReference type="SMART" id="SM00986">
    <property type="entry name" value="UDG"/>
    <property type="match status" value="1"/>
</dbReference>
<dbReference type="SMART" id="SM00987">
    <property type="entry name" value="UreE_C"/>
    <property type="match status" value="1"/>
</dbReference>
<dbReference type="SUPFAM" id="SSF52141">
    <property type="entry name" value="Uracil-DNA glycosylase-like"/>
    <property type="match status" value="1"/>
</dbReference>
<dbReference type="PROSITE" id="PS00130">
    <property type="entry name" value="U_DNA_GLYCOSYLASE"/>
    <property type="match status" value="1"/>
</dbReference>
<comment type="function">
    <text evidence="1">Excises uracil residues from the DNA which can arise as a result of misincorporation of dUMP residues by DNA polymerase or due to deamination of cytosine.</text>
</comment>
<comment type="catalytic activity">
    <reaction evidence="1">
        <text>Hydrolyzes single-stranded DNA or mismatched double-stranded DNA and polynucleotides, releasing free uracil.</text>
        <dbReference type="EC" id="3.2.2.27"/>
    </reaction>
</comment>
<comment type="subcellular location">
    <subcellularLocation>
        <location evidence="1">Cytoplasm</location>
    </subcellularLocation>
</comment>
<comment type="similarity">
    <text evidence="1">Belongs to the uracil-DNA glycosylase (UDG) superfamily. UNG family.</text>
</comment>
<accession>B5RKV2</accession>
<sequence>MEVKIEESWKEMLKSEFCKGYFKRLVSFIKNEYKTKKDKIFPPPRLIFNAFDTLPFKDIKVVILGQDPYHGKGQANGLAFSVNSDIKIPPSLQNIFKEIERSLKIKTIPNGDLTRWAEQGTFLLNSILTVEEGRPSSHKDIGWEIFTNEVIKIISKNLNNVVFMLWGNFAKGKKELIDTSKHLILETSHPSPYSAHNGFLGSNHFSKTLRYLQEHNKTTINFQ</sequence>
<feature type="chain" id="PRO_1000096566" description="Uracil-DNA glycosylase">
    <location>
        <begin position="1"/>
        <end position="223"/>
    </location>
</feature>
<feature type="active site" description="Proton acceptor" evidence="1">
    <location>
        <position position="67"/>
    </location>
</feature>
<keyword id="KW-0963">Cytoplasm</keyword>
<keyword id="KW-0227">DNA damage</keyword>
<keyword id="KW-0234">DNA repair</keyword>
<keyword id="KW-0378">Hydrolase</keyword>
<reference key="1">
    <citation type="journal article" date="2008" name="PLoS Genet.">
        <title>The genome of Borrelia recurrentis, the agent of deadly louse-borne relapsing fever, is a degraded subset of tick-borne Borrelia duttonii.</title>
        <authorList>
            <person name="Lescot M."/>
            <person name="Audic S."/>
            <person name="Robert C."/>
            <person name="Nguyen T.T."/>
            <person name="Blanc G."/>
            <person name="Cutler S.J."/>
            <person name="Wincker P."/>
            <person name="Couloux A."/>
            <person name="Claverie J.-M."/>
            <person name="Raoult D."/>
            <person name="Drancourt M."/>
        </authorList>
    </citation>
    <scope>NUCLEOTIDE SEQUENCE [LARGE SCALE GENOMIC DNA]</scope>
    <source>
        <strain>Ly</strain>
    </source>
</reference>